<feature type="chain" id="PRO_0000198981" description="Nucleoid occlusion factor SlmA">
    <location>
        <begin position="1"/>
        <end position="197"/>
    </location>
</feature>
<feature type="domain" description="HTH tetR-type" evidence="1">
    <location>
        <begin position="7"/>
        <end position="67"/>
    </location>
</feature>
<feature type="DNA-binding region" description="H-T-H motif" evidence="1">
    <location>
        <begin position="30"/>
        <end position="49"/>
    </location>
</feature>
<accession>Q8E9L9</accession>
<keyword id="KW-0131">Cell cycle</keyword>
<keyword id="KW-0132">Cell division</keyword>
<keyword id="KW-0963">Cytoplasm</keyword>
<keyword id="KW-0238">DNA-binding</keyword>
<keyword id="KW-1185">Reference proteome</keyword>
<organism>
    <name type="scientific">Shewanella oneidensis (strain ATCC 700550 / JCM 31522 / CIP 106686 / LMG 19005 / NCIMB 14063 / MR-1)</name>
    <dbReference type="NCBI Taxonomy" id="211586"/>
    <lineage>
        <taxon>Bacteria</taxon>
        <taxon>Pseudomonadati</taxon>
        <taxon>Pseudomonadota</taxon>
        <taxon>Gammaproteobacteria</taxon>
        <taxon>Alteromonadales</taxon>
        <taxon>Shewanellaceae</taxon>
        <taxon>Shewanella</taxon>
    </lineage>
</organism>
<gene>
    <name evidence="1" type="primary">slmA</name>
    <name type="ordered locus">SO_4251</name>
</gene>
<dbReference type="EMBL" id="AE014299">
    <property type="protein sequence ID" value="AAN57222.1"/>
    <property type="molecule type" value="Genomic_DNA"/>
</dbReference>
<dbReference type="RefSeq" id="NP_719778.1">
    <property type="nucleotide sequence ID" value="NC_004347.2"/>
</dbReference>
<dbReference type="RefSeq" id="WP_011073926.1">
    <property type="nucleotide sequence ID" value="NZ_CP053946.1"/>
</dbReference>
<dbReference type="SMR" id="Q8E9L9"/>
<dbReference type="STRING" id="211586.SO_4251"/>
<dbReference type="PaxDb" id="211586-SO_4251"/>
<dbReference type="GeneID" id="75187083"/>
<dbReference type="KEGG" id="son:SO_4251"/>
<dbReference type="PATRIC" id="fig|211586.12.peg.4110"/>
<dbReference type="eggNOG" id="COG1309">
    <property type="taxonomic scope" value="Bacteria"/>
</dbReference>
<dbReference type="HOGENOM" id="CLU_069356_5_0_6"/>
<dbReference type="OrthoDB" id="9179041at2"/>
<dbReference type="PhylomeDB" id="Q8E9L9"/>
<dbReference type="BioCyc" id="SONE211586:G1GMP-3927-MONOMER"/>
<dbReference type="Proteomes" id="UP000008186">
    <property type="component" value="Chromosome"/>
</dbReference>
<dbReference type="GO" id="GO:0043590">
    <property type="term" value="C:bacterial nucleoid"/>
    <property type="evidence" value="ECO:0007669"/>
    <property type="project" value="UniProtKB-UniRule"/>
</dbReference>
<dbReference type="GO" id="GO:0005737">
    <property type="term" value="C:cytoplasm"/>
    <property type="evidence" value="ECO:0007669"/>
    <property type="project" value="UniProtKB-UniRule"/>
</dbReference>
<dbReference type="GO" id="GO:0003700">
    <property type="term" value="F:DNA-binding transcription factor activity"/>
    <property type="evidence" value="ECO:0000318"/>
    <property type="project" value="GO_Central"/>
</dbReference>
<dbReference type="GO" id="GO:0000976">
    <property type="term" value="F:transcription cis-regulatory region binding"/>
    <property type="evidence" value="ECO:0000318"/>
    <property type="project" value="GO_Central"/>
</dbReference>
<dbReference type="GO" id="GO:0051301">
    <property type="term" value="P:cell division"/>
    <property type="evidence" value="ECO:0007669"/>
    <property type="project" value="UniProtKB-KW"/>
</dbReference>
<dbReference type="GO" id="GO:0010974">
    <property type="term" value="P:negative regulation of division septum assembly"/>
    <property type="evidence" value="ECO:0007669"/>
    <property type="project" value="InterPro"/>
</dbReference>
<dbReference type="GO" id="GO:0006355">
    <property type="term" value="P:regulation of DNA-templated transcription"/>
    <property type="evidence" value="ECO:0000318"/>
    <property type="project" value="GO_Central"/>
</dbReference>
<dbReference type="Gene3D" id="1.10.357.10">
    <property type="entry name" value="Tetracycline Repressor, domain 2"/>
    <property type="match status" value="1"/>
</dbReference>
<dbReference type="HAMAP" id="MF_01839">
    <property type="entry name" value="NO_factor_SlmA"/>
    <property type="match status" value="1"/>
</dbReference>
<dbReference type="InterPro" id="IPR009057">
    <property type="entry name" value="Homeodomain-like_sf"/>
</dbReference>
<dbReference type="InterPro" id="IPR050624">
    <property type="entry name" value="HTH-type_Tx_Regulator"/>
</dbReference>
<dbReference type="InterPro" id="IPR001647">
    <property type="entry name" value="HTH_TetR"/>
</dbReference>
<dbReference type="InterPro" id="IPR023769">
    <property type="entry name" value="NO_SlmA"/>
</dbReference>
<dbReference type="InterPro" id="IPR054580">
    <property type="entry name" value="SlmA-like_C"/>
</dbReference>
<dbReference type="InterPro" id="IPR036271">
    <property type="entry name" value="Tet_transcr_reg_TetR-rel_C_sf"/>
</dbReference>
<dbReference type="NCBIfam" id="NF007015">
    <property type="entry name" value="PRK09480.1"/>
    <property type="match status" value="1"/>
</dbReference>
<dbReference type="PANTHER" id="PTHR43479">
    <property type="entry name" value="ACREF/ENVCD OPERON REPRESSOR-RELATED"/>
    <property type="match status" value="1"/>
</dbReference>
<dbReference type="PANTHER" id="PTHR43479:SF11">
    <property type="entry name" value="ACREF_ENVCD OPERON REPRESSOR-RELATED"/>
    <property type="match status" value="1"/>
</dbReference>
<dbReference type="Pfam" id="PF22276">
    <property type="entry name" value="SlmA-like_C"/>
    <property type="match status" value="1"/>
</dbReference>
<dbReference type="Pfam" id="PF00440">
    <property type="entry name" value="TetR_N"/>
    <property type="match status" value="1"/>
</dbReference>
<dbReference type="SUPFAM" id="SSF46689">
    <property type="entry name" value="Homeodomain-like"/>
    <property type="match status" value="1"/>
</dbReference>
<dbReference type="SUPFAM" id="SSF48498">
    <property type="entry name" value="Tetracyclin repressor-like, C-terminal domain"/>
    <property type="match status" value="1"/>
</dbReference>
<dbReference type="PROSITE" id="PS50977">
    <property type="entry name" value="HTH_TETR_2"/>
    <property type="match status" value="1"/>
</dbReference>
<name>SLMA_SHEON</name>
<sequence>MAVSPKINRREHILQCLAQMLETSPGQRITTAKLASEVGVSEAALYRHFPSKARMFEGLIEFIEESLLSRINIIMDDEKDTMKRCQLVLQLLLIFAERNPGISRVLNGDALLGENERLRSRISTLFAKIETQLKQILREKTLREGKGFNLDEAILANLLLAFAEGRIAQFVRSEFKLKPTQHFDEQWRFIQHQLLQS</sequence>
<reference key="1">
    <citation type="journal article" date="2002" name="Nat. Biotechnol.">
        <title>Genome sequence of the dissimilatory metal ion-reducing bacterium Shewanella oneidensis.</title>
        <authorList>
            <person name="Heidelberg J.F."/>
            <person name="Paulsen I.T."/>
            <person name="Nelson K.E."/>
            <person name="Gaidos E.J."/>
            <person name="Nelson W.C."/>
            <person name="Read T.D."/>
            <person name="Eisen J.A."/>
            <person name="Seshadri R."/>
            <person name="Ward N.L."/>
            <person name="Methe B.A."/>
            <person name="Clayton R.A."/>
            <person name="Meyer T."/>
            <person name="Tsapin A."/>
            <person name="Scott J."/>
            <person name="Beanan M.J."/>
            <person name="Brinkac L.M."/>
            <person name="Daugherty S.C."/>
            <person name="DeBoy R.T."/>
            <person name="Dodson R.J."/>
            <person name="Durkin A.S."/>
            <person name="Haft D.H."/>
            <person name="Kolonay J.F."/>
            <person name="Madupu R."/>
            <person name="Peterson J.D."/>
            <person name="Umayam L.A."/>
            <person name="White O."/>
            <person name="Wolf A.M."/>
            <person name="Vamathevan J.J."/>
            <person name="Weidman J.F."/>
            <person name="Impraim M."/>
            <person name="Lee K."/>
            <person name="Berry K.J."/>
            <person name="Lee C."/>
            <person name="Mueller J."/>
            <person name="Khouri H.M."/>
            <person name="Gill J."/>
            <person name="Utterback T.R."/>
            <person name="McDonald L.A."/>
            <person name="Feldblyum T.V."/>
            <person name="Smith H.O."/>
            <person name="Venter J.C."/>
            <person name="Nealson K.H."/>
            <person name="Fraser C.M."/>
        </authorList>
    </citation>
    <scope>NUCLEOTIDE SEQUENCE [LARGE SCALE GENOMIC DNA]</scope>
    <source>
        <strain>ATCC 700550 / JCM 31522 / CIP 106686 / LMG 19005 / NCIMB 14063 / MR-1</strain>
    </source>
</reference>
<evidence type="ECO:0000255" key="1">
    <source>
        <dbReference type="HAMAP-Rule" id="MF_01839"/>
    </source>
</evidence>
<comment type="function">
    <text evidence="1">Required for nucleoid occlusion (NO) phenomenon, which prevents Z-ring formation and cell division over the nucleoid. Acts as a DNA-associated cell division inhibitor that binds simultaneously chromosomal DNA and FtsZ, and disrupts the assembly of FtsZ polymers. SlmA-DNA-binding sequences (SBS) are dispersed on non-Ter regions of the chromosome, preventing FtsZ polymerization at these regions.</text>
</comment>
<comment type="subunit">
    <text evidence="1">Homodimer. Interacts with FtsZ.</text>
</comment>
<comment type="subcellular location">
    <subcellularLocation>
        <location evidence="1">Cytoplasm</location>
        <location evidence="1">Nucleoid</location>
    </subcellularLocation>
</comment>
<comment type="similarity">
    <text evidence="1">Belongs to the nucleoid occlusion factor SlmA family.</text>
</comment>
<protein>
    <recommendedName>
        <fullName evidence="1">Nucleoid occlusion factor SlmA</fullName>
    </recommendedName>
</protein>
<proteinExistence type="inferred from homology"/>